<organism>
    <name type="scientific">Mus musculus</name>
    <name type="common">Mouse</name>
    <dbReference type="NCBI Taxonomy" id="10090"/>
    <lineage>
        <taxon>Eukaryota</taxon>
        <taxon>Metazoa</taxon>
        <taxon>Chordata</taxon>
        <taxon>Craniata</taxon>
        <taxon>Vertebrata</taxon>
        <taxon>Euteleostomi</taxon>
        <taxon>Mammalia</taxon>
        <taxon>Eutheria</taxon>
        <taxon>Euarchontoglires</taxon>
        <taxon>Glires</taxon>
        <taxon>Rodentia</taxon>
        <taxon>Myomorpha</taxon>
        <taxon>Muroidea</taxon>
        <taxon>Muridae</taxon>
        <taxon>Murinae</taxon>
        <taxon>Mus</taxon>
        <taxon>Mus</taxon>
    </lineage>
</organism>
<accession>Q0VDT2</accession>
<accession>B1B191</accession>
<accession>B1B192</accession>
<accession>Q8BH90</accession>
<accession>Q8BI44</accession>
<accession>Q8BI88</accession>
<reference key="1">
    <citation type="journal article" date="2005" name="Science">
        <title>The transcriptional landscape of the mammalian genome.</title>
        <authorList>
            <person name="Carninci P."/>
            <person name="Kasukawa T."/>
            <person name="Katayama S."/>
            <person name="Gough J."/>
            <person name="Frith M.C."/>
            <person name="Maeda N."/>
            <person name="Oyama R."/>
            <person name="Ravasi T."/>
            <person name="Lenhard B."/>
            <person name="Wells C."/>
            <person name="Kodzius R."/>
            <person name="Shimokawa K."/>
            <person name="Bajic V.B."/>
            <person name="Brenner S.E."/>
            <person name="Batalov S."/>
            <person name="Forrest A.R."/>
            <person name="Zavolan M."/>
            <person name="Davis M.J."/>
            <person name="Wilming L.G."/>
            <person name="Aidinis V."/>
            <person name="Allen J.E."/>
            <person name="Ambesi-Impiombato A."/>
            <person name="Apweiler R."/>
            <person name="Aturaliya R.N."/>
            <person name="Bailey T.L."/>
            <person name="Bansal M."/>
            <person name="Baxter L."/>
            <person name="Beisel K.W."/>
            <person name="Bersano T."/>
            <person name="Bono H."/>
            <person name="Chalk A.M."/>
            <person name="Chiu K.P."/>
            <person name="Choudhary V."/>
            <person name="Christoffels A."/>
            <person name="Clutterbuck D.R."/>
            <person name="Crowe M.L."/>
            <person name="Dalla E."/>
            <person name="Dalrymple B.P."/>
            <person name="de Bono B."/>
            <person name="Della Gatta G."/>
            <person name="di Bernardo D."/>
            <person name="Down T."/>
            <person name="Engstrom P."/>
            <person name="Fagiolini M."/>
            <person name="Faulkner G."/>
            <person name="Fletcher C.F."/>
            <person name="Fukushima T."/>
            <person name="Furuno M."/>
            <person name="Futaki S."/>
            <person name="Gariboldi M."/>
            <person name="Georgii-Hemming P."/>
            <person name="Gingeras T.R."/>
            <person name="Gojobori T."/>
            <person name="Green R.E."/>
            <person name="Gustincich S."/>
            <person name="Harbers M."/>
            <person name="Hayashi Y."/>
            <person name="Hensch T.K."/>
            <person name="Hirokawa N."/>
            <person name="Hill D."/>
            <person name="Huminiecki L."/>
            <person name="Iacono M."/>
            <person name="Ikeo K."/>
            <person name="Iwama A."/>
            <person name="Ishikawa T."/>
            <person name="Jakt M."/>
            <person name="Kanapin A."/>
            <person name="Katoh M."/>
            <person name="Kawasawa Y."/>
            <person name="Kelso J."/>
            <person name="Kitamura H."/>
            <person name="Kitano H."/>
            <person name="Kollias G."/>
            <person name="Krishnan S.P."/>
            <person name="Kruger A."/>
            <person name="Kummerfeld S.K."/>
            <person name="Kurochkin I.V."/>
            <person name="Lareau L.F."/>
            <person name="Lazarevic D."/>
            <person name="Lipovich L."/>
            <person name="Liu J."/>
            <person name="Liuni S."/>
            <person name="McWilliam S."/>
            <person name="Madan Babu M."/>
            <person name="Madera M."/>
            <person name="Marchionni L."/>
            <person name="Matsuda H."/>
            <person name="Matsuzawa S."/>
            <person name="Miki H."/>
            <person name="Mignone F."/>
            <person name="Miyake S."/>
            <person name="Morris K."/>
            <person name="Mottagui-Tabar S."/>
            <person name="Mulder N."/>
            <person name="Nakano N."/>
            <person name="Nakauchi H."/>
            <person name="Ng P."/>
            <person name="Nilsson R."/>
            <person name="Nishiguchi S."/>
            <person name="Nishikawa S."/>
            <person name="Nori F."/>
            <person name="Ohara O."/>
            <person name="Okazaki Y."/>
            <person name="Orlando V."/>
            <person name="Pang K.C."/>
            <person name="Pavan W.J."/>
            <person name="Pavesi G."/>
            <person name="Pesole G."/>
            <person name="Petrovsky N."/>
            <person name="Piazza S."/>
            <person name="Reed J."/>
            <person name="Reid J.F."/>
            <person name="Ring B.Z."/>
            <person name="Ringwald M."/>
            <person name="Rost B."/>
            <person name="Ruan Y."/>
            <person name="Salzberg S.L."/>
            <person name="Sandelin A."/>
            <person name="Schneider C."/>
            <person name="Schoenbach C."/>
            <person name="Sekiguchi K."/>
            <person name="Semple C.A."/>
            <person name="Seno S."/>
            <person name="Sessa L."/>
            <person name="Sheng Y."/>
            <person name="Shibata Y."/>
            <person name="Shimada H."/>
            <person name="Shimada K."/>
            <person name="Silva D."/>
            <person name="Sinclair B."/>
            <person name="Sperling S."/>
            <person name="Stupka E."/>
            <person name="Sugiura K."/>
            <person name="Sultana R."/>
            <person name="Takenaka Y."/>
            <person name="Taki K."/>
            <person name="Tammoja K."/>
            <person name="Tan S.L."/>
            <person name="Tang S."/>
            <person name="Taylor M.S."/>
            <person name="Tegner J."/>
            <person name="Teichmann S.A."/>
            <person name="Ueda H.R."/>
            <person name="van Nimwegen E."/>
            <person name="Verardo R."/>
            <person name="Wei C.L."/>
            <person name="Yagi K."/>
            <person name="Yamanishi H."/>
            <person name="Zabarovsky E."/>
            <person name="Zhu S."/>
            <person name="Zimmer A."/>
            <person name="Hide W."/>
            <person name="Bult C."/>
            <person name="Grimmond S.M."/>
            <person name="Teasdale R.D."/>
            <person name="Liu E.T."/>
            <person name="Brusic V."/>
            <person name="Quackenbush J."/>
            <person name="Wahlestedt C."/>
            <person name="Mattick J.S."/>
            <person name="Hume D.A."/>
            <person name="Kai C."/>
            <person name="Sasaki D."/>
            <person name="Tomaru Y."/>
            <person name="Fukuda S."/>
            <person name="Kanamori-Katayama M."/>
            <person name="Suzuki M."/>
            <person name="Aoki J."/>
            <person name="Arakawa T."/>
            <person name="Iida J."/>
            <person name="Imamura K."/>
            <person name="Itoh M."/>
            <person name="Kato T."/>
            <person name="Kawaji H."/>
            <person name="Kawagashira N."/>
            <person name="Kawashima T."/>
            <person name="Kojima M."/>
            <person name="Kondo S."/>
            <person name="Konno H."/>
            <person name="Nakano K."/>
            <person name="Ninomiya N."/>
            <person name="Nishio T."/>
            <person name="Okada M."/>
            <person name="Plessy C."/>
            <person name="Shibata K."/>
            <person name="Shiraki T."/>
            <person name="Suzuki S."/>
            <person name="Tagami M."/>
            <person name="Waki K."/>
            <person name="Watahiki A."/>
            <person name="Okamura-Oho Y."/>
            <person name="Suzuki H."/>
            <person name="Kawai J."/>
            <person name="Hayashizaki Y."/>
        </authorList>
    </citation>
    <scope>NUCLEOTIDE SEQUENCE [LARGE SCALE MRNA] (ISOFORMS 1 AND 2)</scope>
    <source>
        <strain>C57BL/6J</strain>
        <tissue>Lung</tissue>
        <tissue>Testis</tissue>
        <tissue>Thymus</tissue>
    </source>
</reference>
<reference key="2">
    <citation type="journal article" date="2009" name="PLoS Biol.">
        <title>Lineage-specific biology revealed by a finished genome assembly of the mouse.</title>
        <authorList>
            <person name="Church D.M."/>
            <person name="Goodstadt L."/>
            <person name="Hillier L.W."/>
            <person name="Zody M.C."/>
            <person name="Goldstein S."/>
            <person name="She X."/>
            <person name="Bult C.J."/>
            <person name="Agarwala R."/>
            <person name="Cherry J.L."/>
            <person name="DiCuccio M."/>
            <person name="Hlavina W."/>
            <person name="Kapustin Y."/>
            <person name="Meric P."/>
            <person name="Maglott D."/>
            <person name="Birtle Z."/>
            <person name="Marques A.C."/>
            <person name="Graves T."/>
            <person name="Zhou S."/>
            <person name="Teague B."/>
            <person name="Potamousis K."/>
            <person name="Churas C."/>
            <person name="Place M."/>
            <person name="Herschleb J."/>
            <person name="Runnheim R."/>
            <person name="Forrest D."/>
            <person name="Amos-Landgraf J."/>
            <person name="Schwartz D.C."/>
            <person name="Cheng Z."/>
            <person name="Lindblad-Toh K."/>
            <person name="Eichler E.E."/>
            <person name="Ponting C.P."/>
        </authorList>
    </citation>
    <scope>NUCLEOTIDE SEQUENCE [LARGE SCALE GENOMIC DNA]</scope>
    <source>
        <strain>C57BL/6J</strain>
    </source>
</reference>
<reference key="3">
    <citation type="journal article" date="2004" name="Genome Res.">
        <title>The status, quality, and expansion of the NIH full-length cDNA project: the Mammalian Gene Collection (MGC).</title>
        <authorList>
            <consortium name="The MGC Project Team"/>
        </authorList>
    </citation>
    <scope>NUCLEOTIDE SEQUENCE [LARGE SCALE MRNA] (ISOFORM 1)</scope>
</reference>
<reference key="4">
    <citation type="submission" date="2009-01" db="UniProtKB">
        <authorList>
            <person name="Lubec G."/>
            <person name="Sunyer B."/>
            <person name="Chen W.-Q."/>
        </authorList>
    </citation>
    <scope>PROTEIN SEQUENCE OF 244-252</scope>
    <scope>IDENTIFICATION BY MASS SPECTROMETRY</scope>
    <source>
        <strain>OF1</strain>
        <tissue>Hippocampus</tissue>
    </source>
</reference>
<reference key="5">
    <citation type="journal article" date="2004" name="Biochem. J.">
        <title>Molecular cloning and characterization of ZFF29: a protein containing a unique Cys2His2 zinc-finger motif.</title>
        <authorList>
            <person name="Asano H."/>
            <person name="Murate T."/>
            <person name="Naoe T."/>
            <person name="Saito H."/>
            <person name="Stamatoyannopoulos G."/>
        </authorList>
    </citation>
    <scope>TISSUE SPECIFICITY</scope>
    <scope>DEVELOPMENTAL STAGE</scope>
    <source>
        <tissue>Fetal liver</tissue>
    </source>
</reference>
<reference key="6">
    <citation type="journal article" date="2010" name="Cell">
        <title>A tissue-specific atlas of mouse protein phosphorylation and expression.</title>
        <authorList>
            <person name="Huttlin E.L."/>
            <person name="Jedrychowski M.P."/>
            <person name="Elias J.E."/>
            <person name="Goswami T."/>
            <person name="Rad R."/>
            <person name="Beausoleil S.A."/>
            <person name="Villen J."/>
            <person name="Haas W."/>
            <person name="Sowa M.E."/>
            <person name="Gygi S.P."/>
        </authorList>
    </citation>
    <scope>PHOSPHORYLATION [LARGE SCALE ANALYSIS] AT SER-300</scope>
    <scope>IDENTIFICATION BY MASS SPECTROMETRY [LARGE SCALE ANALYSIS]</scope>
    <source>
        <tissue>Spleen</tissue>
    </source>
</reference>
<comment type="function">
    <text evidence="1">Transcriptional activator. Isoform 1 may be involved in transcriptional activation of erythroid genes (By similarity).</text>
</comment>
<comment type="subcellular location">
    <subcellularLocation>
        <location evidence="1">Nucleus</location>
    </subcellularLocation>
</comment>
<comment type="alternative products">
    <event type="alternative splicing"/>
    <isoform>
        <id>Q0VDT2-1</id>
        <name>1</name>
        <name>Zff29B</name>
        <sequence type="displayed"/>
    </isoform>
    <isoform>
        <id>Q0VDT2-2</id>
        <name>2</name>
        <sequence type="described" ref="VSP_024866"/>
    </isoform>
</comment>
<comment type="tissue specificity">
    <text evidence="5">Expressed in bone marrow and ovary.</text>
</comment>
<comment type="developmental stage">
    <text evidence="5">Highly expressed in fetal erythroid tissue. Lower expression in yolk sac.</text>
</comment>
<comment type="similarity">
    <text evidence="7">Belongs to the krueppel C2H2-type zinc-finger protein family.</text>
</comment>
<comment type="sequence caution" evidence="7">
    <conflict type="erroneous initiation">
        <sequence resource="EMBL-CDS" id="BAC39364"/>
    </conflict>
</comment>
<proteinExistence type="evidence at protein level"/>
<sequence>MIRGAPAPMAEPPPVVFCHDSPKRVLVSVIRTTPATPPCSSVGEPEPPPPLVPTSPGFSDFMVYPWRWGENAHNVTLSPGAAGGVVSAGLPVAAELPTLRGAPQSSASVAAVSGGEDEEEASSPDSGHLKDGIRRGRPRADTVRDLINEGEHSSSRIRCNICNRVFPREKSLQAHKRTHTGERPYLCDYPDCGKAFVQSGQLKTHQRLHTGEKPFVCSENGCLSRFTHANRHCPKHPYARLKREEPTDALSKHQSPDNKAAAEWLAKYWEMREQRTPTLKGKLVQKADQEQQDPLEYLQSDEEDDEKSGAQRRLQEQRERLHGALALIELANLTGAPLRQ</sequence>
<feature type="chain" id="PRO_0000285298" description="Zinc finger protein 367">
    <location>
        <begin position="1"/>
        <end position="340"/>
    </location>
</feature>
<feature type="zinc finger region" description="C2H2-type 1" evidence="3">
    <location>
        <begin position="157"/>
        <end position="179"/>
    </location>
</feature>
<feature type="zinc finger region" description="C2H2-type 2" evidence="3">
    <location>
        <begin position="185"/>
        <end position="209"/>
    </location>
</feature>
<feature type="region of interest" description="Disordered" evidence="4">
    <location>
        <begin position="101"/>
        <end position="140"/>
    </location>
</feature>
<feature type="region of interest" description="Disordered" evidence="4">
    <location>
        <begin position="280"/>
        <end position="317"/>
    </location>
</feature>
<feature type="coiled-coil region" evidence="2">
    <location>
        <begin position="299"/>
        <end position="332"/>
    </location>
</feature>
<feature type="compositionally biased region" description="Basic and acidic residues" evidence="4">
    <location>
        <begin position="127"/>
        <end position="140"/>
    </location>
</feature>
<feature type="compositionally biased region" description="Basic and acidic residues" evidence="4">
    <location>
        <begin position="307"/>
        <end position="317"/>
    </location>
</feature>
<feature type="modified residue" description="Phosphoserine" evidence="8">
    <location>
        <position position="300"/>
    </location>
</feature>
<feature type="splice variant" id="VSP_024866" description="In isoform 2." evidence="6">
    <location>
        <begin position="268"/>
        <end position="340"/>
    </location>
</feature>
<feature type="sequence conflict" description="In Ref. 3; AAI19533/AAI19532." evidence="7" ref="3">
    <original>A</original>
    <variation>V</variation>
    <location>
        <position position="5"/>
    </location>
</feature>
<feature type="sequence conflict" description="In Ref. 3; AAI19533/AAI19532." evidence="7" ref="3">
    <original>V</original>
    <variation>I</variation>
    <location>
        <position position="16"/>
    </location>
</feature>
<keyword id="KW-0010">Activator</keyword>
<keyword id="KW-0025">Alternative splicing</keyword>
<keyword id="KW-0175">Coiled coil</keyword>
<keyword id="KW-0903">Direct protein sequencing</keyword>
<keyword id="KW-0238">DNA-binding</keyword>
<keyword id="KW-0479">Metal-binding</keyword>
<keyword id="KW-0539">Nucleus</keyword>
<keyword id="KW-0597">Phosphoprotein</keyword>
<keyword id="KW-1185">Reference proteome</keyword>
<keyword id="KW-0677">Repeat</keyword>
<keyword id="KW-0804">Transcription</keyword>
<keyword id="KW-0805">Transcription regulation</keyword>
<keyword id="KW-0862">Zinc</keyword>
<keyword id="KW-0863">Zinc-finger</keyword>
<dbReference type="EMBL" id="AK033288">
    <property type="protein sequence ID" value="BAC28224.1"/>
    <property type="molecule type" value="mRNA"/>
</dbReference>
<dbReference type="EMBL" id="AK041331">
    <property type="protein sequence ID" value="BAC30909.1"/>
    <property type="molecule type" value="mRNA"/>
</dbReference>
<dbReference type="EMBL" id="AK041361">
    <property type="protein sequence ID" value="BAC30919.1"/>
    <property type="molecule type" value="mRNA"/>
</dbReference>
<dbReference type="EMBL" id="AK085094">
    <property type="protein sequence ID" value="BAC39364.1"/>
    <property type="status" value="ALT_INIT"/>
    <property type="molecule type" value="mRNA"/>
</dbReference>
<dbReference type="EMBL" id="AC158990">
    <property type="status" value="NOT_ANNOTATED_CDS"/>
    <property type="molecule type" value="Genomic_DNA"/>
</dbReference>
<dbReference type="EMBL" id="CT009717">
    <property type="status" value="NOT_ANNOTATED_CDS"/>
    <property type="molecule type" value="Genomic_DNA"/>
</dbReference>
<dbReference type="EMBL" id="BC119531">
    <property type="protein sequence ID" value="AAI19532.1"/>
    <property type="molecule type" value="mRNA"/>
</dbReference>
<dbReference type="EMBL" id="BC119532">
    <property type="protein sequence ID" value="AAI19533.1"/>
    <property type="molecule type" value="mRNA"/>
</dbReference>
<dbReference type="CCDS" id="CCDS26596.1">
    <molecule id="Q0VDT2-1"/>
</dbReference>
<dbReference type="RefSeq" id="NP_780703.1">
    <molecule id="Q0VDT2-1"/>
    <property type="nucleotide sequence ID" value="NM_175494.4"/>
</dbReference>
<dbReference type="SMR" id="Q0VDT2"/>
<dbReference type="FunCoup" id="Q0VDT2">
    <property type="interactions" value="2597"/>
</dbReference>
<dbReference type="STRING" id="10090.ENSMUSP00000050854"/>
<dbReference type="GlyGen" id="Q0VDT2">
    <property type="glycosylation" value="1 site"/>
</dbReference>
<dbReference type="iPTMnet" id="Q0VDT2"/>
<dbReference type="PhosphoSitePlus" id="Q0VDT2"/>
<dbReference type="PaxDb" id="10090-ENSMUSP00000050854"/>
<dbReference type="ProteomicsDB" id="299576">
    <molecule id="Q0VDT2-1"/>
</dbReference>
<dbReference type="ProteomicsDB" id="299577">
    <molecule id="Q0VDT2-2"/>
</dbReference>
<dbReference type="Antibodypedia" id="14186">
    <property type="antibodies" value="93 antibodies from 16 providers"/>
</dbReference>
<dbReference type="DNASU" id="238673"/>
<dbReference type="Ensembl" id="ENSMUST00000059817.12">
    <molecule id="Q0VDT2-1"/>
    <property type="protein sequence ID" value="ENSMUSP00000050854.5"/>
    <property type="gene ID" value="ENSMUSG00000044934.14"/>
</dbReference>
<dbReference type="Ensembl" id="ENSMUST00000117241.2">
    <molecule id="Q0VDT2-2"/>
    <property type="protein sequence ID" value="ENSMUSP00000113331.2"/>
    <property type="gene ID" value="ENSMUSG00000044934.14"/>
</dbReference>
<dbReference type="GeneID" id="238673"/>
<dbReference type="KEGG" id="mmu:238673"/>
<dbReference type="UCSC" id="uc007qyj.1">
    <molecule id="Q0VDT2-1"/>
    <property type="organism name" value="mouse"/>
</dbReference>
<dbReference type="AGR" id="MGI:2442266"/>
<dbReference type="CTD" id="238673"/>
<dbReference type="MGI" id="MGI:2442266">
    <property type="gene designation" value="Zfp367"/>
</dbReference>
<dbReference type="VEuPathDB" id="HostDB:ENSMUSG00000044934"/>
<dbReference type="eggNOG" id="KOG1721">
    <property type="taxonomic scope" value="Eukaryota"/>
</dbReference>
<dbReference type="GeneTree" id="ENSGT00670000098074"/>
<dbReference type="HOGENOM" id="CLU_068261_0_0_1"/>
<dbReference type="InParanoid" id="Q0VDT2"/>
<dbReference type="OMA" id="NKHPHVI"/>
<dbReference type="OrthoDB" id="3437960at2759"/>
<dbReference type="PhylomeDB" id="Q0VDT2"/>
<dbReference type="TreeFam" id="TF321334"/>
<dbReference type="BioGRID-ORCS" id="238673">
    <property type="hits" value="6 hits in 82 CRISPR screens"/>
</dbReference>
<dbReference type="ChiTaRS" id="Zfp367">
    <property type="organism name" value="mouse"/>
</dbReference>
<dbReference type="PRO" id="PR:Q0VDT2"/>
<dbReference type="Proteomes" id="UP000000589">
    <property type="component" value="Chromosome 13"/>
</dbReference>
<dbReference type="RNAct" id="Q0VDT2">
    <property type="molecule type" value="protein"/>
</dbReference>
<dbReference type="Bgee" id="ENSMUSG00000044934">
    <property type="expression patterns" value="Expressed in spermatocyte and 222 other cell types or tissues"/>
</dbReference>
<dbReference type="GO" id="GO:0005654">
    <property type="term" value="C:nucleoplasm"/>
    <property type="evidence" value="ECO:0007669"/>
    <property type="project" value="Ensembl"/>
</dbReference>
<dbReference type="GO" id="GO:0005634">
    <property type="term" value="C:nucleus"/>
    <property type="evidence" value="ECO:0000266"/>
    <property type="project" value="MGI"/>
</dbReference>
<dbReference type="GO" id="GO:0003677">
    <property type="term" value="F:DNA binding"/>
    <property type="evidence" value="ECO:0007669"/>
    <property type="project" value="UniProtKB-KW"/>
</dbReference>
<dbReference type="GO" id="GO:0003700">
    <property type="term" value="F:DNA-binding transcription factor activity"/>
    <property type="evidence" value="ECO:0000266"/>
    <property type="project" value="MGI"/>
</dbReference>
<dbReference type="GO" id="GO:0008270">
    <property type="term" value="F:zinc ion binding"/>
    <property type="evidence" value="ECO:0007669"/>
    <property type="project" value="UniProtKB-KW"/>
</dbReference>
<dbReference type="GO" id="GO:0006357">
    <property type="term" value="P:regulation of transcription by RNA polymerase II"/>
    <property type="evidence" value="ECO:0000266"/>
    <property type="project" value="MGI"/>
</dbReference>
<dbReference type="FunFam" id="3.30.160.60:FF:000535">
    <property type="entry name" value="Zinc finger protein 367"/>
    <property type="match status" value="1"/>
</dbReference>
<dbReference type="FunFam" id="3.30.160.60:FF:000474">
    <property type="entry name" value="zinc finger protein 367"/>
    <property type="match status" value="1"/>
</dbReference>
<dbReference type="Gene3D" id="3.30.160.60">
    <property type="entry name" value="Classic Zinc Finger"/>
    <property type="match status" value="3"/>
</dbReference>
<dbReference type="InterPro" id="IPR036236">
    <property type="entry name" value="Znf_C2H2_sf"/>
</dbReference>
<dbReference type="InterPro" id="IPR013087">
    <property type="entry name" value="Znf_C2H2_type"/>
</dbReference>
<dbReference type="PANTHER" id="PTHR23235">
    <property type="entry name" value="KRUEPPEL-LIKE TRANSCRIPTION FACTOR"/>
    <property type="match status" value="1"/>
</dbReference>
<dbReference type="PANTHER" id="PTHR23235:SF130">
    <property type="entry name" value="ZINC FINGER PROTEIN 367"/>
    <property type="match status" value="1"/>
</dbReference>
<dbReference type="Pfam" id="PF00096">
    <property type="entry name" value="zf-C2H2"/>
    <property type="match status" value="1"/>
</dbReference>
<dbReference type="Pfam" id="PF13912">
    <property type="entry name" value="zf-C2H2_6"/>
    <property type="match status" value="1"/>
</dbReference>
<dbReference type="SMART" id="SM00355">
    <property type="entry name" value="ZnF_C2H2"/>
    <property type="match status" value="2"/>
</dbReference>
<dbReference type="SUPFAM" id="SSF57667">
    <property type="entry name" value="beta-beta-alpha zinc fingers"/>
    <property type="match status" value="1"/>
</dbReference>
<dbReference type="PROSITE" id="PS00028">
    <property type="entry name" value="ZINC_FINGER_C2H2_1"/>
    <property type="match status" value="2"/>
</dbReference>
<dbReference type="PROSITE" id="PS50157">
    <property type="entry name" value="ZINC_FINGER_C2H2_2"/>
    <property type="match status" value="2"/>
</dbReference>
<evidence type="ECO:0000250" key="1"/>
<evidence type="ECO:0000255" key="2"/>
<evidence type="ECO:0000255" key="3">
    <source>
        <dbReference type="PROSITE-ProRule" id="PRU00042"/>
    </source>
</evidence>
<evidence type="ECO:0000256" key="4">
    <source>
        <dbReference type="SAM" id="MobiDB-lite"/>
    </source>
</evidence>
<evidence type="ECO:0000269" key="5">
    <source>
    </source>
</evidence>
<evidence type="ECO:0000303" key="6">
    <source>
    </source>
</evidence>
<evidence type="ECO:0000305" key="7"/>
<evidence type="ECO:0007744" key="8">
    <source>
    </source>
</evidence>
<name>ZN367_MOUSE</name>
<protein>
    <recommendedName>
        <fullName>Zinc finger protein 367</fullName>
    </recommendedName>
    <alternativeName>
        <fullName>C2H2 zinc finger protein ZFF29</fullName>
    </alternativeName>
</protein>
<gene>
    <name type="primary">Znf367</name>
    <name type="synonym">Zff29</name>
    <name type="synonym">Zfp367</name>
</gene>